<dbReference type="EC" id="1.5.1.5" evidence="1"/>
<dbReference type="EC" id="3.5.4.9" evidence="1"/>
<dbReference type="EMBL" id="CP000090">
    <property type="protein sequence ID" value="AAZ60669.1"/>
    <property type="molecule type" value="Genomic_DNA"/>
</dbReference>
<dbReference type="SMR" id="Q472L4"/>
<dbReference type="STRING" id="264198.Reut_A1299"/>
<dbReference type="KEGG" id="reu:Reut_A1299"/>
<dbReference type="eggNOG" id="COG0190">
    <property type="taxonomic scope" value="Bacteria"/>
</dbReference>
<dbReference type="HOGENOM" id="CLU_034045_2_1_4"/>
<dbReference type="OrthoDB" id="9803580at2"/>
<dbReference type="UniPathway" id="UPA00193"/>
<dbReference type="GO" id="GO:0005829">
    <property type="term" value="C:cytosol"/>
    <property type="evidence" value="ECO:0007669"/>
    <property type="project" value="TreeGrafter"/>
</dbReference>
<dbReference type="GO" id="GO:0004477">
    <property type="term" value="F:methenyltetrahydrofolate cyclohydrolase activity"/>
    <property type="evidence" value="ECO:0007669"/>
    <property type="project" value="UniProtKB-UniRule"/>
</dbReference>
<dbReference type="GO" id="GO:0004488">
    <property type="term" value="F:methylenetetrahydrofolate dehydrogenase (NADP+) activity"/>
    <property type="evidence" value="ECO:0007669"/>
    <property type="project" value="UniProtKB-UniRule"/>
</dbReference>
<dbReference type="GO" id="GO:0000105">
    <property type="term" value="P:L-histidine biosynthetic process"/>
    <property type="evidence" value="ECO:0007669"/>
    <property type="project" value="UniProtKB-KW"/>
</dbReference>
<dbReference type="GO" id="GO:0009086">
    <property type="term" value="P:methionine biosynthetic process"/>
    <property type="evidence" value="ECO:0007669"/>
    <property type="project" value="UniProtKB-KW"/>
</dbReference>
<dbReference type="GO" id="GO:0006164">
    <property type="term" value="P:purine nucleotide biosynthetic process"/>
    <property type="evidence" value="ECO:0007669"/>
    <property type="project" value="UniProtKB-KW"/>
</dbReference>
<dbReference type="GO" id="GO:0035999">
    <property type="term" value="P:tetrahydrofolate interconversion"/>
    <property type="evidence" value="ECO:0007669"/>
    <property type="project" value="UniProtKB-UniRule"/>
</dbReference>
<dbReference type="CDD" id="cd01080">
    <property type="entry name" value="NAD_bind_m-THF_DH_Cyclohyd"/>
    <property type="match status" value="1"/>
</dbReference>
<dbReference type="FunFam" id="3.40.50.720:FF:000094">
    <property type="entry name" value="Bifunctional protein FolD"/>
    <property type="match status" value="1"/>
</dbReference>
<dbReference type="FunFam" id="3.40.50.10860:FF:000005">
    <property type="entry name" value="C-1-tetrahydrofolate synthase, cytoplasmic, putative"/>
    <property type="match status" value="1"/>
</dbReference>
<dbReference type="Gene3D" id="3.40.50.10860">
    <property type="entry name" value="Leucine Dehydrogenase, chain A, domain 1"/>
    <property type="match status" value="1"/>
</dbReference>
<dbReference type="Gene3D" id="3.40.50.720">
    <property type="entry name" value="NAD(P)-binding Rossmann-like Domain"/>
    <property type="match status" value="1"/>
</dbReference>
<dbReference type="HAMAP" id="MF_01576">
    <property type="entry name" value="THF_DHG_CYH"/>
    <property type="match status" value="1"/>
</dbReference>
<dbReference type="InterPro" id="IPR046346">
    <property type="entry name" value="Aminoacid_DH-like_N_sf"/>
</dbReference>
<dbReference type="InterPro" id="IPR036291">
    <property type="entry name" value="NAD(P)-bd_dom_sf"/>
</dbReference>
<dbReference type="InterPro" id="IPR000672">
    <property type="entry name" value="THF_DH/CycHdrlase"/>
</dbReference>
<dbReference type="InterPro" id="IPR020630">
    <property type="entry name" value="THF_DH/CycHdrlase_cat_dom"/>
</dbReference>
<dbReference type="InterPro" id="IPR020867">
    <property type="entry name" value="THF_DH/CycHdrlase_CS"/>
</dbReference>
<dbReference type="InterPro" id="IPR020631">
    <property type="entry name" value="THF_DH/CycHdrlase_NAD-bd_dom"/>
</dbReference>
<dbReference type="NCBIfam" id="NF008058">
    <property type="entry name" value="PRK10792.1"/>
    <property type="match status" value="1"/>
</dbReference>
<dbReference type="NCBIfam" id="NF010783">
    <property type="entry name" value="PRK14186.1"/>
    <property type="match status" value="1"/>
</dbReference>
<dbReference type="NCBIfam" id="NF010786">
    <property type="entry name" value="PRK14189.1"/>
    <property type="match status" value="1"/>
</dbReference>
<dbReference type="PANTHER" id="PTHR48099:SF5">
    <property type="entry name" value="C-1-TETRAHYDROFOLATE SYNTHASE, CYTOPLASMIC"/>
    <property type="match status" value="1"/>
</dbReference>
<dbReference type="PANTHER" id="PTHR48099">
    <property type="entry name" value="C-1-TETRAHYDROFOLATE SYNTHASE, CYTOPLASMIC-RELATED"/>
    <property type="match status" value="1"/>
</dbReference>
<dbReference type="Pfam" id="PF00763">
    <property type="entry name" value="THF_DHG_CYH"/>
    <property type="match status" value="1"/>
</dbReference>
<dbReference type="Pfam" id="PF02882">
    <property type="entry name" value="THF_DHG_CYH_C"/>
    <property type="match status" value="1"/>
</dbReference>
<dbReference type="PRINTS" id="PR00085">
    <property type="entry name" value="THFDHDRGNASE"/>
</dbReference>
<dbReference type="SUPFAM" id="SSF53223">
    <property type="entry name" value="Aminoacid dehydrogenase-like, N-terminal domain"/>
    <property type="match status" value="1"/>
</dbReference>
<dbReference type="SUPFAM" id="SSF51735">
    <property type="entry name" value="NAD(P)-binding Rossmann-fold domains"/>
    <property type="match status" value="1"/>
</dbReference>
<dbReference type="PROSITE" id="PS00766">
    <property type="entry name" value="THF_DHG_CYH_1"/>
    <property type="match status" value="1"/>
</dbReference>
<dbReference type="PROSITE" id="PS00767">
    <property type="entry name" value="THF_DHG_CYH_2"/>
    <property type="match status" value="1"/>
</dbReference>
<reference key="1">
    <citation type="journal article" date="2010" name="PLoS ONE">
        <title>The complete multipartite genome sequence of Cupriavidus necator JMP134, a versatile pollutant degrader.</title>
        <authorList>
            <person name="Lykidis A."/>
            <person name="Perez-Pantoja D."/>
            <person name="Ledger T."/>
            <person name="Mavromatis K."/>
            <person name="Anderson I.J."/>
            <person name="Ivanova N.N."/>
            <person name="Hooper S.D."/>
            <person name="Lapidus A."/>
            <person name="Lucas S."/>
            <person name="Gonzalez B."/>
            <person name="Kyrpides N.C."/>
        </authorList>
    </citation>
    <scope>NUCLEOTIDE SEQUENCE [LARGE SCALE GENOMIC DNA]</scope>
    <source>
        <strain>JMP134 / LMG 1197</strain>
    </source>
</reference>
<organism>
    <name type="scientific">Cupriavidus pinatubonensis (strain JMP 134 / LMG 1197)</name>
    <name type="common">Cupriavidus necator (strain JMP 134)</name>
    <dbReference type="NCBI Taxonomy" id="264198"/>
    <lineage>
        <taxon>Bacteria</taxon>
        <taxon>Pseudomonadati</taxon>
        <taxon>Pseudomonadota</taxon>
        <taxon>Betaproteobacteria</taxon>
        <taxon>Burkholderiales</taxon>
        <taxon>Burkholderiaceae</taxon>
        <taxon>Cupriavidus</taxon>
    </lineage>
</organism>
<comment type="function">
    <text evidence="1">Catalyzes the oxidation of 5,10-methylenetetrahydrofolate to 5,10-methenyltetrahydrofolate and then the hydrolysis of 5,10-methenyltetrahydrofolate to 10-formyltetrahydrofolate.</text>
</comment>
<comment type="catalytic activity">
    <reaction evidence="1">
        <text>(6R)-5,10-methylene-5,6,7,8-tetrahydrofolate + NADP(+) = (6R)-5,10-methenyltetrahydrofolate + NADPH</text>
        <dbReference type="Rhea" id="RHEA:22812"/>
        <dbReference type="ChEBI" id="CHEBI:15636"/>
        <dbReference type="ChEBI" id="CHEBI:57455"/>
        <dbReference type="ChEBI" id="CHEBI:57783"/>
        <dbReference type="ChEBI" id="CHEBI:58349"/>
        <dbReference type="EC" id="1.5.1.5"/>
    </reaction>
</comment>
<comment type="catalytic activity">
    <reaction evidence="1">
        <text>(6R)-5,10-methenyltetrahydrofolate + H2O = (6R)-10-formyltetrahydrofolate + H(+)</text>
        <dbReference type="Rhea" id="RHEA:23700"/>
        <dbReference type="ChEBI" id="CHEBI:15377"/>
        <dbReference type="ChEBI" id="CHEBI:15378"/>
        <dbReference type="ChEBI" id="CHEBI:57455"/>
        <dbReference type="ChEBI" id="CHEBI:195366"/>
        <dbReference type="EC" id="3.5.4.9"/>
    </reaction>
</comment>
<comment type="pathway">
    <text evidence="1">One-carbon metabolism; tetrahydrofolate interconversion.</text>
</comment>
<comment type="subunit">
    <text evidence="1">Homodimer.</text>
</comment>
<comment type="similarity">
    <text evidence="1">Belongs to the tetrahydrofolate dehydrogenase/cyclohydrolase family.</text>
</comment>
<gene>
    <name evidence="1" type="primary">folD</name>
    <name type="ordered locus">Reut_A1299</name>
</gene>
<accession>Q472L4</accession>
<name>FOLD_CUPPJ</name>
<sequence>MSAQLIDGNALAKQIRSEAAVRAARLTERGHQPGLAVVLVGEDPASQVYVRNKVKACEDNGFHSSLDRYPADLSEAELLARIDALNNDPKIHGILVQLPLPKHIDSHKVLEAIAPEKDVDGFHVANAGALMTGAPLFRPCTPYGCMKMLESISYPLRGARAVVVGASNIVGKPMAMLLLQAGATVTICNSKTRDIGAHTRDADVIVAAVGKRNLITADMVKPGAVVIDVGMNRDDNGKLCGDVDFAGVREVAGYITPVPGGVGPMTITMLLINTLEAAERAAG</sequence>
<proteinExistence type="inferred from homology"/>
<keyword id="KW-0028">Amino-acid biosynthesis</keyword>
<keyword id="KW-0368">Histidine biosynthesis</keyword>
<keyword id="KW-0378">Hydrolase</keyword>
<keyword id="KW-0486">Methionine biosynthesis</keyword>
<keyword id="KW-0511">Multifunctional enzyme</keyword>
<keyword id="KW-0521">NADP</keyword>
<keyword id="KW-0554">One-carbon metabolism</keyword>
<keyword id="KW-0560">Oxidoreductase</keyword>
<keyword id="KW-0658">Purine biosynthesis</keyword>
<evidence type="ECO:0000255" key="1">
    <source>
        <dbReference type="HAMAP-Rule" id="MF_01576"/>
    </source>
</evidence>
<protein>
    <recommendedName>
        <fullName evidence="1">Bifunctional protein FolD</fullName>
    </recommendedName>
    <domain>
        <recommendedName>
            <fullName evidence="1">Methylenetetrahydrofolate dehydrogenase</fullName>
            <ecNumber evidence="1">1.5.1.5</ecNumber>
        </recommendedName>
    </domain>
    <domain>
        <recommendedName>
            <fullName evidence="1">Methenyltetrahydrofolate cyclohydrolase</fullName>
            <ecNumber evidence="1">3.5.4.9</ecNumber>
        </recommendedName>
    </domain>
</protein>
<feature type="chain" id="PRO_0000268456" description="Bifunctional protein FolD">
    <location>
        <begin position="1"/>
        <end position="283"/>
    </location>
</feature>
<feature type="binding site" evidence="1">
    <location>
        <begin position="165"/>
        <end position="167"/>
    </location>
    <ligand>
        <name>NADP(+)</name>
        <dbReference type="ChEBI" id="CHEBI:58349"/>
    </ligand>
</feature>
<feature type="binding site" evidence="1">
    <location>
        <position position="190"/>
    </location>
    <ligand>
        <name>NADP(+)</name>
        <dbReference type="ChEBI" id="CHEBI:58349"/>
    </ligand>
</feature>